<organism>
    <name type="scientific">Homo sapiens</name>
    <name type="common">Human</name>
    <dbReference type="NCBI Taxonomy" id="9606"/>
    <lineage>
        <taxon>Eukaryota</taxon>
        <taxon>Metazoa</taxon>
        <taxon>Chordata</taxon>
        <taxon>Craniata</taxon>
        <taxon>Vertebrata</taxon>
        <taxon>Euteleostomi</taxon>
        <taxon>Mammalia</taxon>
        <taxon>Eutheria</taxon>
        <taxon>Euarchontoglires</taxon>
        <taxon>Primates</taxon>
        <taxon>Haplorrhini</taxon>
        <taxon>Catarrhini</taxon>
        <taxon>Hominidae</taxon>
        <taxon>Homo</taxon>
    </lineage>
</organism>
<reference key="1">
    <citation type="journal article" date="2004" name="Nature">
        <title>The DNA sequence and comparative analysis of human chromosome 5.</title>
        <authorList>
            <person name="Schmutz J."/>
            <person name="Martin J."/>
            <person name="Terry A."/>
            <person name="Couronne O."/>
            <person name="Grimwood J."/>
            <person name="Lowry S."/>
            <person name="Gordon L.A."/>
            <person name="Scott D."/>
            <person name="Xie G."/>
            <person name="Huang W."/>
            <person name="Hellsten U."/>
            <person name="Tran-Gyamfi M."/>
            <person name="She X."/>
            <person name="Prabhakar S."/>
            <person name="Aerts A."/>
            <person name="Altherr M."/>
            <person name="Bajorek E."/>
            <person name="Black S."/>
            <person name="Branscomb E."/>
            <person name="Caoile C."/>
            <person name="Challacombe J.F."/>
            <person name="Chan Y.M."/>
            <person name="Denys M."/>
            <person name="Detter J.C."/>
            <person name="Escobar J."/>
            <person name="Flowers D."/>
            <person name="Fotopulos D."/>
            <person name="Glavina T."/>
            <person name="Gomez M."/>
            <person name="Gonzales E."/>
            <person name="Goodstein D."/>
            <person name="Grigoriev I."/>
            <person name="Groza M."/>
            <person name="Hammon N."/>
            <person name="Hawkins T."/>
            <person name="Haydu L."/>
            <person name="Israni S."/>
            <person name="Jett J."/>
            <person name="Kadner K."/>
            <person name="Kimball H."/>
            <person name="Kobayashi A."/>
            <person name="Lopez F."/>
            <person name="Lou Y."/>
            <person name="Martinez D."/>
            <person name="Medina C."/>
            <person name="Morgan J."/>
            <person name="Nandkeshwar R."/>
            <person name="Noonan J.P."/>
            <person name="Pitluck S."/>
            <person name="Pollard M."/>
            <person name="Predki P."/>
            <person name="Priest J."/>
            <person name="Ramirez L."/>
            <person name="Retterer J."/>
            <person name="Rodriguez A."/>
            <person name="Rogers S."/>
            <person name="Salamov A."/>
            <person name="Salazar A."/>
            <person name="Thayer N."/>
            <person name="Tice H."/>
            <person name="Tsai M."/>
            <person name="Ustaszewska A."/>
            <person name="Vo N."/>
            <person name="Wheeler J."/>
            <person name="Wu K."/>
            <person name="Yang J."/>
            <person name="Dickson M."/>
            <person name="Cheng J.-F."/>
            <person name="Eichler E.E."/>
            <person name="Olsen A."/>
            <person name="Pennacchio L.A."/>
            <person name="Rokhsar D.S."/>
            <person name="Richardson P."/>
            <person name="Lucas S.M."/>
            <person name="Myers R.M."/>
            <person name="Rubin E.M."/>
        </authorList>
    </citation>
    <scope>NUCLEOTIDE SEQUENCE [LARGE SCALE GENOMIC DNA]</scope>
</reference>
<reference key="2">
    <citation type="journal article" date="2010" name="BMC Genomics">
        <title>Expression, tandem repeat copy number variation and stability of four macrosatellite arrays in the human genome.</title>
        <authorList>
            <person name="Tremblay D.C."/>
            <person name="Alexander G. Jr."/>
            <person name="Moseley S."/>
            <person name="Chadwick B.P."/>
        </authorList>
    </citation>
    <scope>TISSUE SPECIFICITY</scope>
</reference>
<keyword id="KW-1185">Reference proteome</keyword>
<dbReference type="EMBL" id="AC106774">
    <property type="status" value="NOT_ANNOTATED_CDS"/>
    <property type="molecule type" value="Genomic_DNA"/>
</dbReference>
<dbReference type="EMBL" id="AC233724">
    <property type="status" value="NOT_ANNOTATED_CDS"/>
    <property type="molecule type" value="Genomic_DNA"/>
</dbReference>
<dbReference type="CCDS" id="CCDS93693.1"/>
<dbReference type="RefSeq" id="NP_001388608.1">
    <property type="nucleotide sequence ID" value="NM_001401679.1"/>
</dbReference>
<dbReference type="SMR" id="P0DW12"/>
<dbReference type="FunCoup" id="P0DW12">
    <property type="interactions" value="2"/>
</dbReference>
<dbReference type="BioMuta" id="ENSG00000283967"/>
<dbReference type="Ensembl" id="ENST00000640846.1">
    <property type="protein sequence ID" value="ENSP00000491351.1"/>
    <property type="gene ID" value="ENSG00000284465.1"/>
</dbReference>
<dbReference type="GeneID" id="112488736"/>
<dbReference type="MANE-Select" id="ENST00000640846.1">
    <property type="protein sequence ID" value="ENSP00000491351.1"/>
    <property type="RefSeq nucleotide sequence ID" value="NM_001401679.1"/>
    <property type="RefSeq protein sequence ID" value="NP_001388608.1"/>
</dbReference>
<dbReference type="AGR" id="HGNC:53850"/>
<dbReference type="GeneCards" id="TAF11L7"/>
<dbReference type="HGNC" id="HGNC:53850">
    <property type="gene designation" value="TAF11L7"/>
</dbReference>
<dbReference type="HPA" id="ENSG00000283967">
    <property type="expression patterns" value="Not detected"/>
</dbReference>
<dbReference type="HPA" id="ENSG00000284042">
    <property type="expression patterns" value="Not detected"/>
</dbReference>
<dbReference type="HPA" id="ENSG00000284234">
    <property type="expression patterns" value="Not detected"/>
</dbReference>
<dbReference type="HPA" id="ENSG00000284356">
    <property type="expression patterns" value="Not detected"/>
</dbReference>
<dbReference type="HPA" id="ENSG00000284465">
    <property type="expression patterns" value="Not detected"/>
</dbReference>
<dbReference type="OrthoDB" id="9532091at2759"/>
<dbReference type="PRO" id="PR:P0DW12"/>
<dbReference type="Proteomes" id="UP000005640">
    <property type="component" value="Chromosome 5"/>
</dbReference>
<dbReference type="GO" id="GO:0005669">
    <property type="term" value="C:transcription factor TFIID complex"/>
    <property type="evidence" value="ECO:0000318"/>
    <property type="project" value="GO_Central"/>
</dbReference>
<dbReference type="GO" id="GO:0046982">
    <property type="term" value="F:protein heterodimerization activity"/>
    <property type="evidence" value="ECO:0007669"/>
    <property type="project" value="InterPro"/>
</dbReference>
<dbReference type="GO" id="GO:0051123">
    <property type="term" value="P:RNA polymerase II preinitiation complex assembly"/>
    <property type="evidence" value="ECO:0000318"/>
    <property type="project" value="GO_Central"/>
</dbReference>
<dbReference type="CDD" id="cd08048">
    <property type="entry name" value="HFD_TAF11"/>
    <property type="match status" value="1"/>
</dbReference>
<dbReference type="FunFam" id="1.10.20.10:FF:000025">
    <property type="entry name" value="Transcription initiation factor TFIID subunit 11"/>
    <property type="match status" value="1"/>
</dbReference>
<dbReference type="Gene3D" id="1.10.20.10">
    <property type="entry name" value="Histone, subunit A"/>
    <property type="match status" value="1"/>
</dbReference>
<dbReference type="InterPro" id="IPR009072">
    <property type="entry name" value="Histone-fold"/>
</dbReference>
<dbReference type="InterPro" id="IPR045127">
    <property type="entry name" value="TAF11-like"/>
</dbReference>
<dbReference type="InterPro" id="IPR006809">
    <property type="entry name" value="TAFII28_dom"/>
</dbReference>
<dbReference type="PANTHER" id="PTHR13218:SF18">
    <property type="entry name" value="TATA-BOX-BINDING PROTEIN-ASSOCIATED FACTOR 11-LIKE PROTEIN 10-RELATED"/>
    <property type="match status" value="1"/>
</dbReference>
<dbReference type="PANTHER" id="PTHR13218">
    <property type="entry name" value="TRANSCRIPTION INITIATION FACTOR TFIID SUBUNIT 11-RELATED"/>
    <property type="match status" value="1"/>
</dbReference>
<dbReference type="Pfam" id="PF04719">
    <property type="entry name" value="TAFII28"/>
    <property type="match status" value="1"/>
</dbReference>
<dbReference type="SUPFAM" id="SSF47113">
    <property type="entry name" value="Histone-fold"/>
    <property type="match status" value="1"/>
</dbReference>
<evidence type="ECO:0000256" key="1">
    <source>
        <dbReference type="SAM" id="MobiDB-lite"/>
    </source>
</evidence>
<evidence type="ECO:0000269" key="2">
    <source>
    </source>
</evidence>
<evidence type="ECO:0000305" key="3"/>
<evidence type="ECO:0000312" key="4">
    <source>
        <dbReference type="HGNC" id="HGNC:53850"/>
    </source>
</evidence>
<name>TFKL7_HUMAN</name>
<feature type="chain" id="PRO_0000456147" description="TATA-box-binding protein-associated factor 11-like protein 7">
    <location>
        <begin position="1"/>
        <end position="198"/>
    </location>
</feature>
<feature type="region of interest" description="Disordered" evidence="1">
    <location>
        <begin position="1"/>
        <end position="90"/>
    </location>
</feature>
<feature type="compositionally biased region" description="Basic and acidic residues" evidence="1">
    <location>
        <begin position="38"/>
        <end position="50"/>
    </location>
</feature>
<feature type="compositionally biased region" description="Basic residues" evidence="1">
    <location>
        <begin position="69"/>
        <end position="78"/>
    </location>
</feature>
<feature type="compositionally biased region" description="Basic and acidic residues" evidence="1">
    <location>
        <begin position="79"/>
        <end position="90"/>
    </location>
</feature>
<gene>
    <name evidence="4" type="primary">TAF11L7</name>
</gene>
<accession>P0DW12</accession>
<sequence length="198" mass="21644">METGRQTGVSAEMLAMPRGLKGSKKDGIPEDLDGNLEAPRDQEGELRSEDVMDLTEGDSEASASAPPAAKRRKTHTKGKKESKPTVDAEEAQRMTTLLSAMSEEQLSRYEVCRRSAFPRARVAGLMRAITGSSVSENAAIAMAGIAKLFVGEVVEEALDVCEMWGETPPLQPKHLREAVRRLKPKGLFPNSNCKRIMF</sequence>
<protein>
    <recommendedName>
        <fullName evidence="3">TATA-box-binding protein-associated factor 11-like protein 7</fullName>
    </recommendedName>
</protein>
<comment type="tissue specificity">
    <text evidence="2">Expressed in fetal brain and testis.</text>
</comment>
<comment type="similarity">
    <text evidence="3">Belongs to the TAF11 family.</text>
</comment>
<proteinExistence type="evidence at transcript level"/>